<keyword id="KW-0004">4Fe-4S</keyword>
<keyword id="KW-0997">Cell inner membrane</keyword>
<keyword id="KW-1003">Cell membrane</keyword>
<keyword id="KW-0408">Iron</keyword>
<keyword id="KW-0411">Iron-sulfur</keyword>
<keyword id="KW-0472">Membrane</keyword>
<keyword id="KW-0479">Metal-binding</keyword>
<keyword id="KW-0520">NAD</keyword>
<keyword id="KW-0874">Quinone</keyword>
<keyword id="KW-1278">Translocase</keyword>
<keyword id="KW-0813">Transport</keyword>
<name>NUOB_CHLCH</name>
<comment type="function">
    <text evidence="1">NDH-1 shuttles electrons from NADH, via FMN and iron-sulfur (Fe-S) centers, to quinones in the respiratory chain. The immediate electron acceptor for the enzyme in this species is believed to be a menaquinone. Couples the redox reaction to proton translocation (for every two electrons transferred, four hydrogen ions are translocated across the cytoplasmic membrane), and thus conserves the redox energy in a proton gradient.</text>
</comment>
<comment type="catalytic activity">
    <reaction evidence="1">
        <text>a quinone + NADH + 5 H(+)(in) = a quinol + NAD(+) + 4 H(+)(out)</text>
        <dbReference type="Rhea" id="RHEA:57888"/>
        <dbReference type="ChEBI" id="CHEBI:15378"/>
        <dbReference type="ChEBI" id="CHEBI:24646"/>
        <dbReference type="ChEBI" id="CHEBI:57540"/>
        <dbReference type="ChEBI" id="CHEBI:57945"/>
        <dbReference type="ChEBI" id="CHEBI:132124"/>
    </reaction>
</comment>
<comment type="cofactor">
    <cofactor evidence="1">
        <name>[4Fe-4S] cluster</name>
        <dbReference type="ChEBI" id="CHEBI:49883"/>
    </cofactor>
    <text evidence="1">Binds 1 [4Fe-4S] cluster.</text>
</comment>
<comment type="subunit">
    <text evidence="1">NDH-1 is composed of 14 different subunits. Subunits NuoB, C, D, E, F, and G constitute the peripheral sector of the complex.</text>
</comment>
<comment type="subcellular location">
    <subcellularLocation>
        <location evidence="1">Cell inner membrane</location>
        <topology evidence="1">Peripheral membrane protein</topology>
        <orientation evidence="1">Cytoplasmic side</orientation>
    </subcellularLocation>
</comment>
<comment type="similarity">
    <text evidence="1">Belongs to the complex I 20 kDa subunit family.</text>
</comment>
<organism>
    <name type="scientific">Chlorobium chlorochromatii (strain CaD3)</name>
    <dbReference type="NCBI Taxonomy" id="340177"/>
    <lineage>
        <taxon>Bacteria</taxon>
        <taxon>Pseudomonadati</taxon>
        <taxon>Chlorobiota</taxon>
        <taxon>Chlorobiia</taxon>
        <taxon>Chlorobiales</taxon>
        <taxon>Chlorobiaceae</taxon>
        <taxon>Chlorobium/Pelodictyon group</taxon>
        <taxon>Chlorobium</taxon>
    </lineage>
</organism>
<proteinExistence type="inferred from homology"/>
<sequence length="190" mass="21042">MGLLDAGITNHNVLVTSVDNVLNWARLSSLWPMGFGLACCAIEMMATNASNYDLERFGIFPRSSPRQSDLMLVAGTVTMKMAERVIRLYEQMPEPRYVLSMGSCSNSGGPYWEHGYHVLKGVDRIIPVDVYVPGCPPRPESLIGGLMKVQELIRMEQIGLSRADALKKLAENPIDPQAIIEQQRKTAVAH</sequence>
<protein>
    <recommendedName>
        <fullName evidence="1">NADH-quinone oxidoreductase subunit B</fullName>
        <ecNumber evidence="1">7.1.1.-</ecNumber>
    </recommendedName>
    <alternativeName>
        <fullName evidence="1">NADH dehydrogenase I subunit B</fullName>
    </alternativeName>
    <alternativeName>
        <fullName evidence="1">NDH-1 subunit B</fullName>
    </alternativeName>
</protein>
<feature type="chain" id="PRO_0000376169" description="NADH-quinone oxidoreductase subunit B">
    <location>
        <begin position="1"/>
        <end position="190"/>
    </location>
</feature>
<feature type="binding site" evidence="1">
    <location>
        <position position="39"/>
    </location>
    <ligand>
        <name>[4Fe-4S] cluster</name>
        <dbReference type="ChEBI" id="CHEBI:49883"/>
    </ligand>
</feature>
<feature type="binding site" evidence="1">
    <location>
        <position position="40"/>
    </location>
    <ligand>
        <name>[4Fe-4S] cluster</name>
        <dbReference type="ChEBI" id="CHEBI:49883"/>
    </ligand>
</feature>
<feature type="binding site" evidence="1">
    <location>
        <position position="104"/>
    </location>
    <ligand>
        <name>[4Fe-4S] cluster</name>
        <dbReference type="ChEBI" id="CHEBI:49883"/>
    </ligand>
</feature>
<feature type="binding site" evidence="1">
    <location>
        <position position="135"/>
    </location>
    <ligand>
        <name>[4Fe-4S] cluster</name>
        <dbReference type="ChEBI" id="CHEBI:49883"/>
    </ligand>
</feature>
<gene>
    <name evidence="1" type="primary">nuoB</name>
    <name type="ordered locus">Cag_0635</name>
</gene>
<dbReference type="EC" id="7.1.1.-" evidence="1"/>
<dbReference type="EMBL" id="CP000108">
    <property type="protein sequence ID" value="ABB27908.1"/>
    <property type="molecule type" value="Genomic_DNA"/>
</dbReference>
<dbReference type="SMR" id="Q3ASW7"/>
<dbReference type="STRING" id="340177.Cag_0635"/>
<dbReference type="KEGG" id="cch:Cag_0635"/>
<dbReference type="eggNOG" id="COG0377">
    <property type="taxonomic scope" value="Bacteria"/>
</dbReference>
<dbReference type="HOGENOM" id="CLU_055737_7_3_10"/>
<dbReference type="OrthoDB" id="9786737at2"/>
<dbReference type="GO" id="GO:0005886">
    <property type="term" value="C:plasma membrane"/>
    <property type="evidence" value="ECO:0007669"/>
    <property type="project" value="UniProtKB-SubCell"/>
</dbReference>
<dbReference type="GO" id="GO:0045271">
    <property type="term" value="C:respiratory chain complex I"/>
    <property type="evidence" value="ECO:0007669"/>
    <property type="project" value="TreeGrafter"/>
</dbReference>
<dbReference type="GO" id="GO:0051539">
    <property type="term" value="F:4 iron, 4 sulfur cluster binding"/>
    <property type="evidence" value="ECO:0007669"/>
    <property type="project" value="UniProtKB-KW"/>
</dbReference>
<dbReference type="GO" id="GO:0005506">
    <property type="term" value="F:iron ion binding"/>
    <property type="evidence" value="ECO:0007669"/>
    <property type="project" value="UniProtKB-UniRule"/>
</dbReference>
<dbReference type="GO" id="GO:0008137">
    <property type="term" value="F:NADH dehydrogenase (ubiquinone) activity"/>
    <property type="evidence" value="ECO:0007669"/>
    <property type="project" value="InterPro"/>
</dbReference>
<dbReference type="GO" id="GO:0050136">
    <property type="term" value="F:NADH:ubiquinone reductase (non-electrogenic) activity"/>
    <property type="evidence" value="ECO:0007669"/>
    <property type="project" value="UniProtKB-UniRule"/>
</dbReference>
<dbReference type="GO" id="GO:0048038">
    <property type="term" value="F:quinone binding"/>
    <property type="evidence" value="ECO:0007669"/>
    <property type="project" value="UniProtKB-KW"/>
</dbReference>
<dbReference type="GO" id="GO:0009060">
    <property type="term" value="P:aerobic respiration"/>
    <property type="evidence" value="ECO:0007669"/>
    <property type="project" value="TreeGrafter"/>
</dbReference>
<dbReference type="GO" id="GO:0015990">
    <property type="term" value="P:electron transport coupled proton transport"/>
    <property type="evidence" value="ECO:0007669"/>
    <property type="project" value="TreeGrafter"/>
</dbReference>
<dbReference type="FunFam" id="3.40.50.12280:FF:000002">
    <property type="entry name" value="NADH-quinone oxidoreductase subunit B"/>
    <property type="match status" value="1"/>
</dbReference>
<dbReference type="Gene3D" id="3.40.50.12280">
    <property type="match status" value="1"/>
</dbReference>
<dbReference type="HAMAP" id="MF_01356">
    <property type="entry name" value="NDH1_NuoB"/>
    <property type="match status" value="1"/>
</dbReference>
<dbReference type="InterPro" id="IPR006137">
    <property type="entry name" value="NADH_UbQ_OxRdtase-like_20kDa"/>
</dbReference>
<dbReference type="InterPro" id="IPR006138">
    <property type="entry name" value="NADH_UQ_OxRdtase_20Kd_su"/>
</dbReference>
<dbReference type="NCBIfam" id="TIGR01957">
    <property type="entry name" value="nuoB_fam"/>
    <property type="match status" value="1"/>
</dbReference>
<dbReference type="NCBIfam" id="NF005012">
    <property type="entry name" value="PRK06411.1"/>
    <property type="match status" value="1"/>
</dbReference>
<dbReference type="NCBIfam" id="NF011388">
    <property type="entry name" value="PRK14813.1"/>
    <property type="match status" value="1"/>
</dbReference>
<dbReference type="PANTHER" id="PTHR11995">
    <property type="entry name" value="NADH DEHYDROGENASE"/>
    <property type="match status" value="1"/>
</dbReference>
<dbReference type="PANTHER" id="PTHR11995:SF33">
    <property type="entry name" value="NADH-QUINONE OXIDOREDUCTASE SUBUNIT B 2"/>
    <property type="match status" value="1"/>
</dbReference>
<dbReference type="Pfam" id="PF01058">
    <property type="entry name" value="Oxidored_q6"/>
    <property type="match status" value="1"/>
</dbReference>
<dbReference type="SUPFAM" id="SSF56770">
    <property type="entry name" value="HydA/Nqo6-like"/>
    <property type="match status" value="1"/>
</dbReference>
<dbReference type="PROSITE" id="PS01150">
    <property type="entry name" value="COMPLEX1_20K"/>
    <property type="match status" value="1"/>
</dbReference>
<accession>Q3ASW7</accession>
<reference key="1">
    <citation type="submission" date="2005-08" db="EMBL/GenBank/DDBJ databases">
        <title>Complete sequence of Chlorobium chlorochromatii CaD3.</title>
        <authorList>
            <consortium name="US DOE Joint Genome Institute"/>
            <person name="Copeland A."/>
            <person name="Lucas S."/>
            <person name="Lapidus A."/>
            <person name="Barry K."/>
            <person name="Detter J.C."/>
            <person name="Glavina T."/>
            <person name="Hammon N."/>
            <person name="Israni S."/>
            <person name="Pitluck S."/>
            <person name="Bryant D."/>
            <person name="Schmutz J."/>
            <person name="Larimer F."/>
            <person name="Land M."/>
            <person name="Kyrpides N."/>
            <person name="Ivanova N."/>
            <person name="Richardson P."/>
        </authorList>
    </citation>
    <scope>NUCLEOTIDE SEQUENCE [LARGE SCALE GENOMIC DNA]</scope>
    <source>
        <strain>CaD3</strain>
    </source>
</reference>
<evidence type="ECO:0000255" key="1">
    <source>
        <dbReference type="HAMAP-Rule" id="MF_01356"/>
    </source>
</evidence>